<dbReference type="EC" id="7.1.2.2" evidence="1"/>
<dbReference type="EMBL" id="AM180355">
    <property type="protein sequence ID" value="CAJ70373.1"/>
    <property type="molecule type" value="Genomic_DNA"/>
</dbReference>
<dbReference type="RefSeq" id="WP_003421367.1">
    <property type="nucleotide sequence ID" value="NZ_JAUPES010000009.1"/>
</dbReference>
<dbReference type="RefSeq" id="YP_001089990.1">
    <property type="nucleotide sequence ID" value="NC_009089.1"/>
</dbReference>
<dbReference type="SMR" id="Q180W8"/>
<dbReference type="STRING" id="272563.CD630_34700"/>
<dbReference type="EnsemblBacteria" id="CAJ70373">
    <property type="protein sequence ID" value="CAJ70373"/>
    <property type="gene ID" value="CD630_34700"/>
</dbReference>
<dbReference type="GeneID" id="66355931"/>
<dbReference type="KEGG" id="cdf:CD630_34700"/>
<dbReference type="KEGG" id="pdc:CDIF630_03781"/>
<dbReference type="PATRIC" id="fig|272563.120.peg.3667"/>
<dbReference type="eggNOG" id="COG0056">
    <property type="taxonomic scope" value="Bacteria"/>
</dbReference>
<dbReference type="OrthoDB" id="9803053at2"/>
<dbReference type="PhylomeDB" id="Q180W8"/>
<dbReference type="BioCyc" id="PDIF272563:G12WB-3650-MONOMER"/>
<dbReference type="Proteomes" id="UP000001978">
    <property type="component" value="Chromosome"/>
</dbReference>
<dbReference type="GO" id="GO:0005886">
    <property type="term" value="C:plasma membrane"/>
    <property type="evidence" value="ECO:0007669"/>
    <property type="project" value="UniProtKB-SubCell"/>
</dbReference>
<dbReference type="GO" id="GO:0045259">
    <property type="term" value="C:proton-transporting ATP synthase complex"/>
    <property type="evidence" value="ECO:0007669"/>
    <property type="project" value="UniProtKB-KW"/>
</dbReference>
<dbReference type="GO" id="GO:0043531">
    <property type="term" value="F:ADP binding"/>
    <property type="evidence" value="ECO:0007669"/>
    <property type="project" value="TreeGrafter"/>
</dbReference>
<dbReference type="GO" id="GO:0005524">
    <property type="term" value="F:ATP binding"/>
    <property type="evidence" value="ECO:0007669"/>
    <property type="project" value="UniProtKB-UniRule"/>
</dbReference>
<dbReference type="GO" id="GO:0046933">
    <property type="term" value="F:proton-transporting ATP synthase activity, rotational mechanism"/>
    <property type="evidence" value="ECO:0007669"/>
    <property type="project" value="UniProtKB-UniRule"/>
</dbReference>
<dbReference type="CDD" id="cd18113">
    <property type="entry name" value="ATP-synt_F1_alpha_C"/>
    <property type="match status" value="1"/>
</dbReference>
<dbReference type="CDD" id="cd18116">
    <property type="entry name" value="ATP-synt_F1_alpha_N"/>
    <property type="match status" value="1"/>
</dbReference>
<dbReference type="CDD" id="cd01132">
    <property type="entry name" value="F1-ATPase_alpha_CD"/>
    <property type="match status" value="1"/>
</dbReference>
<dbReference type="FunFam" id="1.20.150.20:FF:000001">
    <property type="entry name" value="ATP synthase subunit alpha"/>
    <property type="match status" value="1"/>
</dbReference>
<dbReference type="FunFam" id="2.40.30.20:FF:000001">
    <property type="entry name" value="ATP synthase subunit alpha"/>
    <property type="match status" value="1"/>
</dbReference>
<dbReference type="FunFam" id="3.40.50.300:FF:000002">
    <property type="entry name" value="ATP synthase subunit alpha"/>
    <property type="match status" value="1"/>
</dbReference>
<dbReference type="Gene3D" id="2.40.30.20">
    <property type="match status" value="1"/>
</dbReference>
<dbReference type="Gene3D" id="1.20.150.20">
    <property type="entry name" value="ATP synthase alpha/beta chain, C-terminal domain"/>
    <property type="match status" value="1"/>
</dbReference>
<dbReference type="Gene3D" id="3.40.50.300">
    <property type="entry name" value="P-loop containing nucleotide triphosphate hydrolases"/>
    <property type="match status" value="1"/>
</dbReference>
<dbReference type="HAMAP" id="MF_01346">
    <property type="entry name" value="ATP_synth_alpha_bact"/>
    <property type="match status" value="1"/>
</dbReference>
<dbReference type="InterPro" id="IPR023366">
    <property type="entry name" value="ATP_synth_asu-like_sf"/>
</dbReference>
<dbReference type="InterPro" id="IPR000793">
    <property type="entry name" value="ATP_synth_asu_C"/>
</dbReference>
<dbReference type="InterPro" id="IPR038376">
    <property type="entry name" value="ATP_synth_asu_C_sf"/>
</dbReference>
<dbReference type="InterPro" id="IPR033732">
    <property type="entry name" value="ATP_synth_F1_a_nt-bd_dom"/>
</dbReference>
<dbReference type="InterPro" id="IPR005294">
    <property type="entry name" value="ATP_synth_F1_asu"/>
</dbReference>
<dbReference type="InterPro" id="IPR020003">
    <property type="entry name" value="ATPase_a/bsu_AS"/>
</dbReference>
<dbReference type="InterPro" id="IPR004100">
    <property type="entry name" value="ATPase_F1/V1/A1_a/bsu_N"/>
</dbReference>
<dbReference type="InterPro" id="IPR036121">
    <property type="entry name" value="ATPase_F1/V1/A1_a/bsu_N_sf"/>
</dbReference>
<dbReference type="InterPro" id="IPR000194">
    <property type="entry name" value="ATPase_F1/V1/A1_a/bsu_nucl-bd"/>
</dbReference>
<dbReference type="InterPro" id="IPR027417">
    <property type="entry name" value="P-loop_NTPase"/>
</dbReference>
<dbReference type="NCBIfam" id="TIGR00962">
    <property type="entry name" value="atpA"/>
    <property type="match status" value="1"/>
</dbReference>
<dbReference type="NCBIfam" id="NF009884">
    <property type="entry name" value="PRK13343.1"/>
    <property type="match status" value="1"/>
</dbReference>
<dbReference type="PANTHER" id="PTHR48082">
    <property type="entry name" value="ATP SYNTHASE SUBUNIT ALPHA, MITOCHONDRIAL"/>
    <property type="match status" value="1"/>
</dbReference>
<dbReference type="PANTHER" id="PTHR48082:SF2">
    <property type="entry name" value="ATP SYNTHASE SUBUNIT ALPHA, MITOCHONDRIAL"/>
    <property type="match status" value="1"/>
</dbReference>
<dbReference type="Pfam" id="PF00006">
    <property type="entry name" value="ATP-synt_ab"/>
    <property type="match status" value="1"/>
</dbReference>
<dbReference type="Pfam" id="PF00306">
    <property type="entry name" value="ATP-synt_ab_C"/>
    <property type="match status" value="1"/>
</dbReference>
<dbReference type="Pfam" id="PF02874">
    <property type="entry name" value="ATP-synt_ab_N"/>
    <property type="match status" value="1"/>
</dbReference>
<dbReference type="PIRSF" id="PIRSF039088">
    <property type="entry name" value="F_ATPase_subunit_alpha"/>
    <property type="match status" value="1"/>
</dbReference>
<dbReference type="SUPFAM" id="SSF47917">
    <property type="entry name" value="C-terminal domain of alpha and beta subunits of F1 ATP synthase"/>
    <property type="match status" value="1"/>
</dbReference>
<dbReference type="SUPFAM" id="SSF50615">
    <property type="entry name" value="N-terminal domain of alpha and beta subunits of F1 ATP synthase"/>
    <property type="match status" value="1"/>
</dbReference>
<dbReference type="SUPFAM" id="SSF52540">
    <property type="entry name" value="P-loop containing nucleoside triphosphate hydrolases"/>
    <property type="match status" value="1"/>
</dbReference>
<dbReference type="PROSITE" id="PS00152">
    <property type="entry name" value="ATPASE_ALPHA_BETA"/>
    <property type="match status" value="1"/>
</dbReference>
<feature type="chain" id="PRO_0000302637" description="ATP synthase subunit alpha">
    <location>
        <begin position="1"/>
        <end position="500"/>
    </location>
</feature>
<feature type="binding site" evidence="1">
    <location>
        <begin position="169"/>
        <end position="176"/>
    </location>
    <ligand>
        <name>ATP</name>
        <dbReference type="ChEBI" id="CHEBI:30616"/>
    </ligand>
</feature>
<feature type="site" description="Required for activity" evidence="1">
    <location>
        <position position="362"/>
    </location>
</feature>
<gene>
    <name evidence="1" type="primary">atpA</name>
    <name type="ordered locus">CD630_34700</name>
</gene>
<organism>
    <name type="scientific">Clostridioides difficile (strain 630)</name>
    <name type="common">Peptoclostridium difficile</name>
    <dbReference type="NCBI Taxonomy" id="272563"/>
    <lineage>
        <taxon>Bacteria</taxon>
        <taxon>Bacillati</taxon>
        <taxon>Bacillota</taxon>
        <taxon>Clostridia</taxon>
        <taxon>Peptostreptococcales</taxon>
        <taxon>Peptostreptococcaceae</taxon>
        <taxon>Clostridioides</taxon>
    </lineage>
</organism>
<reference key="1">
    <citation type="journal article" date="2006" name="Nat. Genet.">
        <title>The multidrug-resistant human pathogen Clostridium difficile has a highly mobile, mosaic genome.</title>
        <authorList>
            <person name="Sebaihia M."/>
            <person name="Wren B.W."/>
            <person name="Mullany P."/>
            <person name="Fairweather N.F."/>
            <person name="Minton N."/>
            <person name="Stabler R."/>
            <person name="Thomson N.R."/>
            <person name="Roberts A.P."/>
            <person name="Cerdeno-Tarraga A.M."/>
            <person name="Wang H."/>
            <person name="Holden M.T.G."/>
            <person name="Wright A."/>
            <person name="Churcher C."/>
            <person name="Quail M.A."/>
            <person name="Baker S."/>
            <person name="Bason N."/>
            <person name="Brooks K."/>
            <person name="Chillingworth T."/>
            <person name="Cronin A."/>
            <person name="Davis P."/>
            <person name="Dowd L."/>
            <person name="Fraser A."/>
            <person name="Feltwell T."/>
            <person name="Hance Z."/>
            <person name="Holroyd S."/>
            <person name="Jagels K."/>
            <person name="Moule S."/>
            <person name="Mungall K."/>
            <person name="Price C."/>
            <person name="Rabbinowitsch E."/>
            <person name="Sharp S."/>
            <person name="Simmonds M."/>
            <person name="Stevens K."/>
            <person name="Unwin L."/>
            <person name="Whithead S."/>
            <person name="Dupuy B."/>
            <person name="Dougan G."/>
            <person name="Barrell B."/>
            <person name="Parkhill J."/>
        </authorList>
    </citation>
    <scope>NUCLEOTIDE SEQUENCE [LARGE SCALE GENOMIC DNA]</scope>
    <source>
        <strain>630</strain>
    </source>
</reference>
<proteinExistence type="inferred from homology"/>
<sequence length="500" mass="54664">MNLKPEEISSIIKQQIKNYENKVELTDTGSVLTVGDGIASVYGLEKAMSGELLEFPGEIYGMALNLEEEVVGAVILGDDSEIKEGDIVKRTGRIVEVPVGEALIGRVVNSLGQPIDGKGPIAYTKTRPVESEAPGIIDRRSVYEPLQTGIKSIDSMIPIGRGQRELIIGDRQTGKTSIVIDTILNQKGKDVICIYVAIGQKRSTIAQLVSSLEKGGALDYTIVVSATASESAPLQYIAPYAGAAMGEEFMYNGKHVLIVYDDLSKQAVAYREMSLLLRRPPGREAYPGDVFYLHSRLLERAAKLSDELGGGSMTALPIIETQAGDVSAYIPTNVISITDGQIYLQPELFYSGVRPAVDPGISVSRVGGSAQIKAMKKVAGTLKLAYSQYRELAAFSQFGSDLDEDTKKRLAQGERIVEILKQGEHQPIKVENQVMIIYAVINNHLEDIPIDNIARFESELYAFVDNNYPEISRKILGGEDFTHDLTDAINEFKEKFVVEV</sequence>
<protein>
    <recommendedName>
        <fullName evidence="1">ATP synthase subunit alpha</fullName>
        <ecNumber evidence="1">7.1.2.2</ecNumber>
    </recommendedName>
    <alternativeName>
        <fullName evidence="1">ATP synthase F1 sector subunit alpha</fullName>
    </alternativeName>
    <alternativeName>
        <fullName evidence="1">F-ATPase subunit alpha</fullName>
    </alternativeName>
</protein>
<comment type="function">
    <text evidence="1">Produces ATP from ADP in the presence of a proton gradient across the membrane. The alpha chain is a regulatory subunit.</text>
</comment>
<comment type="catalytic activity">
    <reaction evidence="1">
        <text>ATP + H2O + 4 H(+)(in) = ADP + phosphate + 5 H(+)(out)</text>
        <dbReference type="Rhea" id="RHEA:57720"/>
        <dbReference type="ChEBI" id="CHEBI:15377"/>
        <dbReference type="ChEBI" id="CHEBI:15378"/>
        <dbReference type="ChEBI" id="CHEBI:30616"/>
        <dbReference type="ChEBI" id="CHEBI:43474"/>
        <dbReference type="ChEBI" id="CHEBI:456216"/>
        <dbReference type="EC" id="7.1.2.2"/>
    </reaction>
</comment>
<comment type="subunit">
    <text evidence="1">F-type ATPases have 2 components, CF(1) - the catalytic core - and CF(0) - the membrane proton channel. CF(1) has five subunits: alpha(3), beta(3), gamma(1), delta(1), epsilon(1). CF(0) has three main subunits: a(1), b(2) and c(9-12). The alpha and beta chains form an alternating ring which encloses part of the gamma chain. CF(1) is attached to CF(0) by a central stalk formed by the gamma and epsilon chains, while a peripheral stalk is formed by the delta and b chains.</text>
</comment>
<comment type="subcellular location">
    <subcellularLocation>
        <location evidence="1">Cell membrane</location>
        <topology evidence="1">Peripheral membrane protein</topology>
    </subcellularLocation>
</comment>
<comment type="similarity">
    <text evidence="1">Belongs to the ATPase alpha/beta chains family.</text>
</comment>
<accession>Q180W8</accession>
<name>ATPA_CLOD6</name>
<evidence type="ECO:0000255" key="1">
    <source>
        <dbReference type="HAMAP-Rule" id="MF_01346"/>
    </source>
</evidence>
<keyword id="KW-0066">ATP synthesis</keyword>
<keyword id="KW-0067">ATP-binding</keyword>
<keyword id="KW-1003">Cell membrane</keyword>
<keyword id="KW-0139">CF(1)</keyword>
<keyword id="KW-0375">Hydrogen ion transport</keyword>
<keyword id="KW-0406">Ion transport</keyword>
<keyword id="KW-0472">Membrane</keyword>
<keyword id="KW-0547">Nucleotide-binding</keyword>
<keyword id="KW-1185">Reference proteome</keyword>
<keyword id="KW-1278">Translocase</keyword>
<keyword id="KW-0813">Transport</keyword>